<sequence length="364" mass="39093">MIRAFDAFSLPLLRLFDAEDAHRLAIQGLRLLPQVKPRPDDPKLAVRAFGLNFPNPVGIAAGFDKNAEAPDALMRLGFGFVEIGTVTPKPQAGNPRPRLFRLERDEAVINRMGFNNDGSEAVLRRLAARAQQGGILGVNVGANKDSSDRVADYVALIETFAPVASYFTVNVSSPNTPGLRNLQQAAALDDLLARVIEARERVRPSAGDTPVLLKIAPDLTLGELDDVVHIARSRKVDGMIVANTTLSRSPLLRERTRMNEQGGLSGRPLFRLSTRMVAETYVRAEGAFPLIGVGGIDSGGAALTKIRAGASLVQLYSALIYKGLGLVESIKTDLASTLLRTGRDSLAEIVGADAPTITAEEWPV</sequence>
<comment type="function">
    <text evidence="1">Catalyzes the conversion of dihydroorotate to orotate with quinone as electron acceptor.</text>
</comment>
<comment type="catalytic activity">
    <reaction evidence="1">
        <text>(S)-dihydroorotate + a quinone = orotate + a quinol</text>
        <dbReference type="Rhea" id="RHEA:30187"/>
        <dbReference type="ChEBI" id="CHEBI:24646"/>
        <dbReference type="ChEBI" id="CHEBI:30839"/>
        <dbReference type="ChEBI" id="CHEBI:30864"/>
        <dbReference type="ChEBI" id="CHEBI:132124"/>
        <dbReference type="EC" id="1.3.5.2"/>
    </reaction>
</comment>
<comment type="cofactor">
    <cofactor evidence="1">
        <name>FMN</name>
        <dbReference type="ChEBI" id="CHEBI:58210"/>
    </cofactor>
    <text evidence="1">Binds 1 FMN per subunit.</text>
</comment>
<comment type="pathway">
    <text evidence="1">Pyrimidine metabolism; UMP biosynthesis via de novo pathway; orotate from (S)-dihydroorotate (quinone route): step 1/1.</text>
</comment>
<comment type="subunit">
    <text evidence="1">Monomer.</text>
</comment>
<comment type="subcellular location">
    <subcellularLocation>
        <location evidence="1">Cell membrane</location>
        <topology evidence="1">Peripheral membrane protein</topology>
    </subcellularLocation>
</comment>
<comment type="similarity">
    <text evidence="1">Belongs to the dihydroorotate dehydrogenase family. Type 2 subfamily.</text>
</comment>
<feature type="chain" id="PRO_1000024218" description="Dihydroorotate dehydrogenase (quinone)">
    <location>
        <begin position="1"/>
        <end position="364"/>
    </location>
</feature>
<feature type="active site" description="Nucleophile" evidence="1">
    <location>
        <position position="173"/>
    </location>
</feature>
<feature type="binding site" evidence="1">
    <location>
        <begin position="61"/>
        <end position="65"/>
    </location>
    <ligand>
        <name>FMN</name>
        <dbReference type="ChEBI" id="CHEBI:58210"/>
    </ligand>
</feature>
<feature type="binding site" evidence="1">
    <location>
        <position position="65"/>
    </location>
    <ligand>
        <name>substrate</name>
    </ligand>
</feature>
<feature type="binding site" evidence="1">
    <location>
        <position position="85"/>
    </location>
    <ligand>
        <name>FMN</name>
        <dbReference type="ChEBI" id="CHEBI:58210"/>
    </ligand>
</feature>
<feature type="binding site" evidence="1">
    <location>
        <begin position="110"/>
        <end position="114"/>
    </location>
    <ligand>
        <name>substrate</name>
    </ligand>
</feature>
<feature type="binding site" evidence="1">
    <location>
        <position position="139"/>
    </location>
    <ligand>
        <name>FMN</name>
        <dbReference type="ChEBI" id="CHEBI:58210"/>
    </ligand>
</feature>
<feature type="binding site" evidence="1">
    <location>
        <position position="170"/>
    </location>
    <ligand>
        <name>FMN</name>
        <dbReference type="ChEBI" id="CHEBI:58210"/>
    </ligand>
</feature>
<feature type="binding site" evidence="1">
    <location>
        <position position="170"/>
    </location>
    <ligand>
        <name>substrate</name>
    </ligand>
</feature>
<feature type="binding site" evidence="1">
    <location>
        <position position="175"/>
    </location>
    <ligand>
        <name>substrate</name>
    </ligand>
</feature>
<feature type="binding site" evidence="1">
    <location>
        <position position="214"/>
    </location>
    <ligand>
        <name>FMN</name>
        <dbReference type="ChEBI" id="CHEBI:58210"/>
    </ligand>
</feature>
<feature type="binding site" evidence="1">
    <location>
        <position position="242"/>
    </location>
    <ligand>
        <name>FMN</name>
        <dbReference type="ChEBI" id="CHEBI:58210"/>
    </ligand>
</feature>
<feature type="binding site" evidence="1">
    <location>
        <begin position="243"/>
        <end position="244"/>
    </location>
    <ligand>
        <name>substrate</name>
    </ligand>
</feature>
<feature type="binding site" evidence="1">
    <location>
        <position position="266"/>
    </location>
    <ligand>
        <name>FMN</name>
        <dbReference type="ChEBI" id="CHEBI:58210"/>
    </ligand>
</feature>
<feature type="binding site" evidence="1">
    <location>
        <position position="295"/>
    </location>
    <ligand>
        <name>FMN</name>
        <dbReference type="ChEBI" id="CHEBI:58210"/>
    </ligand>
</feature>
<feature type="binding site" evidence="1">
    <location>
        <begin position="316"/>
        <end position="317"/>
    </location>
    <ligand>
        <name>FMN</name>
        <dbReference type="ChEBI" id="CHEBI:58210"/>
    </ligand>
</feature>
<keyword id="KW-1003">Cell membrane</keyword>
<keyword id="KW-0285">Flavoprotein</keyword>
<keyword id="KW-0288">FMN</keyword>
<keyword id="KW-0472">Membrane</keyword>
<keyword id="KW-0560">Oxidoreductase</keyword>
<keyword id="KW-0665">Pyrimidine biosynthesis</keyword>
<name>PYRD_RHOPS</name>
<organism>
    <name type="scientific">Rhodopseudomonas palustris (strain BisB5)</name>
    <dbReference type="NCBI Taxonomy" id="316057"/>
    <lineage>
        <taxon>Bacteria</taxon>
        <taxon>Pseudomonadati</taxon>
        <taxon>Pseudomonadota</taxon>
        <taxon>Alphaproteobacteria</taxon>
        <taxon>Hyphomicrobiales</taxon>
        <taxon>Nitrobacteraceae</taxon>
        <taxon>Rhodopseudomonas</taxon>
    </lineage>
</organism>
<proteinExistence type="inferred from homology"/>
<gene>
    <name evidence="1" type="primary">pyrD</name>
    <name type="ordered locus">RPD_0788</name>
</gene>
<dbReference type="EC" id="1.3.5.2" evidence="1"/>
<dbReference type="EMBL" id="CP000283">
    <property type="protein sequence ID" value="ABE38026.1"/>
    <property type="molecule type" value="Genomic_DNA"/>
</dbReference>
<dbReference type="SMR" id="Q13D13"/>
<dbReference type="STRING" id="316057.RPD_0788"/>
<dbReference type="KEGG" id="rpd:RPD_0788"/>
<dbReference type="eggNOG" id="COG0167">
    <property type="taxonomic scope" value="Bacteria"/>
</dbReference>
<dbReference type="HOGENOM" id="CLU_013640_2_1_5"/>
<dbReference type="BioCyc" id="RPAL316057:RPD_RS04020-MONOMER"/>
<dbReference type="UniPathway" id="UPA00070">
    <property type="reaction ID" value="UER00946"/>
</dbReference>
<dbReference type="Proteomes" id="UP000001818">
    <property type="component" value="Chromosome"/>
</dbReference>
<dbReference type="GO" id="GO:0005737">
    <property type="term" value="C:cytoplasm"/>
    <property type="evidence" value="ECO:0007669"/>
    <property type="project" value="InterPro"/>
</dbReference>
<dbReference type="GO" id="GO:0005886">
    <property type="term" value="C:plasma membrane"/>
    <property type="evidence" value="ECO:0007669"/>
    <property type="project" value="UniProtKB-SubCell"/>
</dbReference>
<dbReference type="GO" id="GO:0106430">
    <property type="term" value="F:dihydroorotate dehydrogenase (quinone) activity"/>
    <property type="evidence" value="ECO:0007669"/>
    <property type="project" value="UniProtKB-EC"/>
</dbReference>
<dbReference type="GO" id="GO:0006207">
    <property type="term" value="P:'de novo' pyrimidine nucleobase biosynthetic process"/>
    <property type="evidence" value="ECO:0007669"/>
    <property type="project" value="InterPro"/>
</dbReference>
<dbReference type="GO" id="GO:0044205">
    <property type="term" value="P:'de novo' UMP biosynthetic process"/>
    <property type="evidence" value="ECO:0007669"/>
    <property type="project" value="UniProtKB-UniRule"/>
</dbReference>
<dbReference type="CDD" id="cd04738">
    <property type="entry name" value="DHOD_2_like"/>
    <property type="match status" value="1"/>
</dbReference>
<dbReference type="Gene3D" id="3.20.20.70">
    <property type="entry name" value="Aldolase class I"/>
    <property type="match status" value="1"/>
</dbReference>
<dbReference type="HAMAP" id="MF_00225">
    <property type="entry name" value="DHO_dh_type2"/>
    <property type="match status" value="1"/>
</dbReference>
<dbReference type="InterPro" id="IPR013785">
    <property type="entry name" value="Aldolase_TIM"/>
</dbReference>
<dbReference type="InterPro" id="IPR050074">
    <property type="entry name" value="DHO_dehydrogenase"/>
</dbReference>
<dbReference type="InterPro" id="IPR005719">
    <property type="entry name" value="Dihydroorotate_DH_2"/>
</dbReference>
<dbReference type="InterPro" id="IPR005720">
    <property type="entry name" value="Dihydroorotate_DH_cat"/>
</dbReference>
<dbReference type="InterPro" id="IPR001295">
    <property type="entry name" value="Dihydroorotate_DH_CS"/>
</dbReference>
<dbReference type="NCBIfam" id="NF003645">
    <property type="entry name" value="PRK05286.1-2"/>
    <property type="match status" value="1"/>
</dbReference>
<dbReference type="NCBIfam" id="NF003652">
    <property type="entry name" value="PRK05286.2-5"/>
    <property type="match status" value="1"/>
</dbReference>
<dbReference type="NCBIfam" id="TIGR01036">
    <property type="entry name" value="pyrD_sub2"/>
    <property type="match status" value="1"/>
</dbReference>
<dbReference type="PANTHER" id="PTHR48109:SF4">
    <property type="entry name" value="DIHYDROOROTATE DEHYDROGENASE (QUINONE), MITOCHONDRIAL"/>
    <property type="match status" value="1"/>
</dbReference>
<dbReference type="PANTHER" id="PTHR48109">
    <property type="entry name" value="DIHYDROOROTATE DEHYDROGENASE (QUINONE), MITOCHONDRIAL-RELATED"/>
    <property type="match status" value="1"/>
</dbReference>
<dbReference type="Pfam" id="PF01180">
    <property type="entry name" value="DHO_dh"/>
    <property type="match status" value="1"/>
</dbReference>
<dbReference type="SUPFAM" id="SSF51395">
    <property type="entry name" value="FMN-linked oxidoreductases"/>
    <property type="match status" value="1"/>
</dbReference>
<dbReference type="PROSITE" id="PS00911">
    <property type="entry name" value="DHODEHASE_1"/>
    <property type="match status" value="1"/>
</dbReference>
<dbReference type="PROSITE" id="PS00912">
    <property type="entry name" value="DHODEHASE_2"/>
    <property type="match status" value="1"/>
</dbReference>
<evidence type="ECO:0000255" key="1">
    <source>
        <dbReference type="HAMAP-Rule" id="MF_00225"/>
    </source>
</evidence>
<protein>
    <recommendedName>
        <fullName evidence="1">Dihydroorotate dehydrogenase (quinone)</fullName>
        <ecNumber evidence="1">1.3.5.2</ecNumber>
    </recommendedName>
    <alternativeName>
        <fullName evidence="1">DHOdehase</fullName>
        <shortName evidence="1">DHOD</shortName>
        <shortName evidence="1">DHODase</shortName>
    </alternativeName>
    <alternativeName>
        <fullName evidence="1">Dihydroorotate oxidase</fullName>
    </alternativeName>
</protein>
<reference key="1">
    <citation type="submission" date="2006-03" db="EMBL/GenBank/DDBJ databases">
        <title>Complete sequence of Rhodopseudomonas palustris BisB5.</title>
        <authorList>
            <consortium name="US DOE Joint Genome Institute"/>
            <person name="Copeland A."/>
            <person name="Lucas S."/>
            <person name="Lapidus A."/>
            <person name="Barry K."/>
            <person name="Detter J.C."/>
            <person name="Glavina del Rio T."/>
            <person name="Hammon N."/>
            <person name="Israni S."/>
            <person name="Dalin E."/>
            <person name="Tice H."/>
            <person name="Pitluck S."/>
            <person name="Chain P."/>
            <person name="Malfatti S."/>
            <person name="Shin M."/>
            <person name="Vergez L."/>
            <person name="Schmutz J."/>
            <person name="Larimer F."/>
            <person name="Land M."/>
            <person name="Hauser L."/>
            <person name="Pelletier D.A."/>
            <person name="Kyrpides N."/>
            <person name="Lykidis A."/>
            <person name="Oda Y."/>
            <person name="Harwood C.S."/>
            <person name="Richardson P."/>
        </authorList>
    </citation>
    <scope>NUCLEOTIDE SEQUENCE [LARGE SCALE GENOMIC DNA]</scope>
    <source>
        <strain>BisB5</strain>
    </source>
</reference>
<accession>Q13D13</accession>